<dbReference type="EC" id="2.3.1.286" evidence="1 2"/>
<dbReference type="EMBL" id="BA000023">
    <property type="protein sequence ID" value="BAK54359.1"/>
    <property type="molecule type" value="Genomic_DNA"/>
</dbReference>
<dbReference type="RefSeq" id="WP_052846381.1">
    <property type="nucleotide sequence ID" value="NC_003106.2"/>
</dbReference>
<dbReference type="SMR" id="Q974M6"/>
<dbReference type="STRING" id="273063.STK_06330"/>
<dbReference type="GeneID" id="1458581"/>
<dbReference type="KEGG" id="sto:STK_06330"/>
<dbReference type="PATRIC" id="fig|273063.9.peg.717"/>
<dbReference type="eggNOG" id="arCOG04248">
    <property type="taxonomic scope" value="Archaea"/>
</dbReference>
<dbReference type="OrthoDB" id="728at2157"/>
<dbReference type="Proteomes" id="UP000001015">
    <property type="component" value="Chromosome"/>
</dbReference>
<dbReference type="GO" id="GO:0005737">
    <property type="term" value="C:cytoplasm"/>
    <property type="evidence" value="ECO:0007669"/>
    <property type="project" value="UniProtKB-SubCell"/>
</dbReference>
<dbReference type="GO" id="GO:0017136">
    <property type="term" value="F:histone deacetylase activity, NAD-dependent"/>
    <property type="evidence" value="ECO:0007669"/>
    <property type="project" value="TreeGrafter"/>
</dbReference>
<dbReference type="GO" id="GO:0070403">
    <property type="term" value="F:NAD+ binding"/>
    <property type="evidence" value="ECO:0007669"/>
    <property type="project" value="UniProtKB-UniRule"/>
</dbReference>
<dbReference type="GO" id="GO:0008270">
    <property type="term" value="F:zinc ion binding"/>
    <property type="evidence" value="ECO:0007669"/>
    <property type="project" value="UniProtKB-UniRule"/>
</dbReference>
<dbReference type="Gene3D" id="3.30.1600.10">
    <property type="entry name" value="SIR2/SIRT2 'Small Domain"/>
    <property type="match status" value="1"/>
</dbReference>
<dbReference type="Gene3D" id="3.40.50.1220">
    <property type="entry name" value="TPP-binding domain"/>
    <property type="match status" value="1"/>
</dbReference>
<dbReference type="HAMAP" id="MF_01968">
    <property type="entry name" value="Sirtuin_ClassU"/>
    <property type="match status" value="1"/>
</dbReference>
<dbReference type="InterPro" id="IPR029035">
    <property type="entry name" value="DHS-like_NAD/FAD-binding_dom"/>
</dbReference>
<dbReference type="InterPro" id="IPR050134">
    <property type="entry name" value="NAD-dep_sirtuin_deacylases"/>
</dbReference>
<dbReference type="InterPro" id="IPR003000">
    <property type="entry name" value="Sirtuin"/>
</dbReference>
<dbReference type="InterPro" id="IPR026591">
    <property type="entry name" value="Sirtuin_cat_small_dom_sf"/>
</dbReference>
<dbReference type="InterPro" id="IPR028628">
    <property type="entry name" value="Sirtuin_class_U"/>
</dbReference>
<dbReference type="InterPro" id="IPR026590">
    <property type="entry name" value="Ssirtuin_cat_dom"/>
</dbReference>
<dbReference type="NCBIfam" id="NF001753">
    <property type="entry name" value="PRK00481.1-3"/>
    <property type="match status" value="1"/>
</dbReference>
<dbReference type="NCBIfam" id="NF040867">
    <property type="entry name" value="prot_deacyl_CobB"/>
    <property type="match status" value="1"/>
</dbReference>
<dbReference type="PANTHER" id="PTHR11085:SF11">
    <property type="entry name" value="NAD-DEPENDENT PROTEIN DEACETYLASE"/>
    <property type="match status" value="1"/>
</dbReference>
<dbReference type="PANTHER" id="PTHR11085">
    <property type="entry name" value="NAD-DEPENDENT PROTEIN DEACYLASE SIRTUIN-5, MITOCHONDRIAL-RELATED"/>
    <property type="match status" value="1"/>
</dbReference>
<dbReference type="Pfam" id="PF02146">
    <property type="entry name" value="SIR2"/>
    <property type="match status" value="1"/>
</dbReference>
<dbReference type="SUPFAM" id="SSF52467">
    <property type="entry name" value="DHS-like NAD/FAD-binding domain"/>
    <property type="match status" value="1"/>
</dbReference>
<dbReference type="PROSITE" id="PS50305">
    <property type="entry name" value="SIRTUIN"/>
    <property type="match status" value="1"/>
</dbReference>
<protein>
    <recommendedName>
        <fullName evidence="1">NAD-dependent protein deacetylase</fullName>
        <ecNumber evidence="1 2">2.3.1.286</ecNumber>
    </recommendedName>
    <alternativeName>
        <fullName evidence="1">Regulatory protein SIR2 homolog</fullName>
    </alternativeName>
</protein>
<gene>
    <name evidence="1" type="primary">cobB</name>
    <name type="ordered locus">STK_06330</name>
</gene>
<comment type="function">
    <text evidence="1">NAD-dependent protein deacetylase which modulates the activities of several enzymes which are inactive in their acetylated form. Deacetylates the N-terminal lysine residue of Alba, the major archaeal chromatin protein and that, in turn, increases Alba's DNA binding affinity, thereby repressing transcription.</text>
</comment>
<comment type="catalytic activity">
    <reaction evidence="1">
        <text>N(6)-acetyl-L-lysyl-[protein] + NAD(+) + H2O = 2''-O-acetyl-ADP-D-ribose + nicotinamide + L-lysyl-[protein]</text>
        <dbReference type="Rhea" id="RHEA:43636"/>
        <dbReference type="Rhea" id="RHEA-COMP:9752"/>
        <dbReference type="Rhea" id="RHEA-COMP:10731"/>
        <dbReference type="ChEBI" id="CHEBI:15377"/>
        <dbReference type="ChEBI" id="CHEBI:17154"/>
        <dbReference type="ChEBI" id="CHEBI:29969"/>
        <dbReference type="ChEBI" id="CHEBI:57540"/>
        <dbReference type="ChEBI" id="CHEBI:61930"/>
        <dbReference type="ChEBI" id="CHEBI:83767"/>
        <dbReference type="EC" id="2.3.1.286"/>
    </reaction>
</comment>
<comment type="cofactor">
    <cofactor evidence="1">
        <name>Zn(2+)</name>
        <dbReference type="ChEBI" id="CHEBI:29105"/>
    </cofactor>
    <text evidence="1">Binds 1 zinc ion per subunit.</text>
</comment>
<comment type="subcellular location">
    <subcellularLocation>
        <location evidence="1">Cytoplasm</location>
    </subcellularLocation>
</comment>
<comment type="similarity">
    <text evidence="1">Belongs to the sirtuin family. Class U subfamily.</text>
</comment>
<reference key="1">
    <citation type="journal article" date="2001" name="DNA Res.">
        <title>Complete genome sequence of an aerobic thermoacidophilic Crenarchaeon, Sulfolobus tokodaii strain7.</title>
        <authorList>
            <person name="Kawarabayasi Y."/>
            <person name="Hino Y."/>
            <person name="Horikawa H."/>
            <person name="Jin-no K."/>
            <person name="Takahashi M."/>
            <person name="Sekine M."/>
            <person name="Baba S."/>
            <person name="Ankai A."/>
            <person name="Kosugi H."/>
            <person name="Hosoyama A."/>
            <person name="Fukui S."/>
            <person name="Nagai Y."/>
            <person name="Nishijima K."/>
            <person name="Otsuka R."/>
            <person name="Nakazawa H."/>
            <person name="Takamiya M."/>
            <person name="Kato Y."/>
            <person name="Yoshizawa T."/>
            <person name="Tanaka T."/>
            <person name="Kudoh Y."/>
            <person name="Yamazaki J."/>
            <person name="Kushida N."/>
            <person name="Oguchi A."/>
            <person name="Aoki K."/>
            <person name="Masuda S."/>
            <person name="Yanagii M."/>
            <person name="Nishimura M."/>
            <person name="Yamagishi A."/>
            <person name="Oshima T."/>
            <person name="Kikuchi H."/>
        </authorList>
    </citation>
    <scope>NUCLEOTIDE SEQUENCE [LARGE SCALE GENOMIC DNA]</scope>
    <source>
        <strain>DSM 16993 / JCM 10545 / NBRC 100140 / 7</strain>
    </source>
</reference>
<evidence type="ECO:0000255" key="1">
    <source>
        <dbReference type="HAMAP-Rule" id="MF_01968"/>
    </source>
</evidence>
<evidence type="ECO:0000255" key="2">
    <source>
        <dbReference type="PROSITE-ProRule" id="PRU00236"/>
    </source>
</evidence>
<organism>
    <name type="scientific">Sulfurisphaera tokodaii (strain DSM 16993 / JCM 10545 / NBRC 100140 / 7)</name>
    <name type="common">Sulfolobus tokodaii</name>
    <dbReference type="NCBI Taxonomy" id="273063"/>
    <lineage>
        <taxon>Archaea</taxon>
        <taxon>Thermoproteota</taxon>
        <taxon>Thermoprotei</taxon>
        <taxon>Sulfolobales</taxon>
        <taxon>Sulfolobaceae</taxon>
        <taxon>Sulfurisphaera</taxon>
    </lineage>
</organism>
<feature type="chain" id="PRO_0000110389" description="NAD-dependent protein deacetylase">
    <location>
        <begin position="1"/>
        <end position="250"/>
    </location>
</feature>
<feature type="domain" description="Deacetylase sirtuin-type" evidence="2">
    <location>
        <begin position="1"/>
        <end position="244"/>
    </location>
</feature>
<feature type="active site" description="Proton acceptor" evidence="2">
    <location>
        <position position="116"/>
    </location>
</feature>
<feature type="binding site" evidence="1">
    <location>
        <position position="22"/>
    </location>
    <ligand>
        <name>NAD(+)</name>
        <dbReference type="ChEBI" id="CHEBI:57540"/>
    </ligand>
</feature>
<feature type="binding site" evidence="1">
    <location>
        <position position="26"/>
    </location>
    <ligand>
        <name>NAD(+)</name>
        <dbReference type="ChEBI" id="CHEBI:57540"/>
    </ligand>
</feature>
<feature type="binding site" evidence="1">
    <location>
        <position position="33"/>
    </location>
    <ligand>
        <name>NAD(+)</name>
        <dbReference type="ChEBI" id="CHEBI:57540"/>
    </ligand>
</feature>
<feature type="binding site" evidence="1">
    <location>
        <position position="33"/>
    </location>
    <ligand>
        <name>nicotinamide</name>
        <dbReference type="ChEBI" id="CHEBI:17154"/>
    </ligand>
</feature>
<feature type="binding site" evidence="1">
    <location>
        <position position="34"/>
    </location>
    <ligand>
        <name>NAD(+)</name>
        <dbReference type="ChEBI" id="CHEBI:57540"/>
    </ligand>
</feature>
<feature type="binding site" evidence="1">
    <location>
        <position position="98"/>
    </location>
    <ligand>
        <name>NAD(+)</name>
        <dbReference type="ChEBI" id="CHEBI:57540"/>
    </ligand>
</feature>
<feature type="binding site" evidence="1">
    <location>
        <position position="100"/>
    </location>
    <ligand>
        <name>NAD(+)</name>
        <dbReference type="ChEBI" id="CHEBI:57540"/>
    </ligand>
</feature>
<feature type="binding site" evidence="1">
    <location>
        <position position="100"/>
    </location>
    <ligand>
        <name>nicotinamide</name>
        <dbReference type="ChEBI" id="CHEBI:17154"/>
    </ligand>
</feature>
<feature type="binding site" evidence="1">
    <location>
        <position position="101"/>
    </location>
    <ligand>
        <name>NAD(+)</name>
        <dbReference type="ChEBI" id="CHEBI:57540"/>
    </ligand>
</feature>
<feature type="binding site" evidence="1">
    <location>
        <position position="101"/>
    </location>
    <ligand>
        <name>nicotinamide</name>
        <dbReference type="ChEBI" id="CHEBI:17154"/>
    </ligand>
</feature>
<feature type="binding site" evidence="1">
    <location>
        <position position="116"/>
    </location>
    <ligand>
        <name>NAD(+)</name>
        <dbReference type="ChEBI" id="CHEBI:57540"/>
    </ligand>
</feature>
<feature type="binding site" evidence="1">
    <location>
        <position position="124"/>
    </location>
    <ligand>
        <name>Zn(2+)</name>
        <dbReference type="ChEBI" id="CHEBI:29105"/>
    </ligand>
</feature>
<feature type="binding site" evidence="1">
    <location>
        <position position="127"/>
    </location>
    <ligand>
        <name>Zn(2+)</name>
        <dbReference type="ChEBI" id="CHEBI:29105"/>
    </ligand>
</feature>
<feature type="binding site" evidence="1">
    <location>
        <position position="149"/>
    </location>
    <ligand>
        <name>Zn(2+)</name>
        <dbReference type="ChEBI" id="CHEBI:29105"/>
    </ligand>
</feature>
<feature type="binding site" evidence="1">
    <location>
        <position position="151"/>
    </location>
    <ligand>
        <name>Zn(2+)</name>
        <dbReference type="ChEBI" id="CHEBI:29105"/>
    </ligand>
</feature>
<feature type="binding site" evidence="1">
    <location>
        <position position="187"/>
    </location>
    <ligand>
        <name>NAD(+)</name>
        <dbReference type="ChEBI" id="CHEBI:57540"/>
    </ligand>
</feature>
<feature type="binding site" evidence="1">
    <location>
        <position position="188"/>
    </location>
    <ligand>
        <name>NAD(+)</name>
        <dbReference type="ChEBI" id="CHEBI:57540"/>
    </ligand>
</feature>
<feature type="binding site" evidence="1">
    <location>
        <position position="212"/>
    </location>
    <ligand>
        <name>NAD(+)</name>
        <dbReference type="ChEBI" id="CHEBI:57540"/>
    </ligand>
</feature>
<feature type="binding site" evidence="1">
    <location>
        <position position="230"/>
    </location>
    <ligand>
        <name>NAD(+)</name>
        <dbReference type="ChEBI" id="CHEBI:57540"/>
    </ligand>
</feature>
<proteinExistence type="inferred from homology"/>
<accession>Q974M6</accession>
<accession>F9VN62</accession>
<name>NPD_SULTO</name>
<sequence length="250" mass="27761">MECDKVGDLLLTSTYAIAFTGAGISTASGIPDFRGPNGLWKKYSPELATIEYFKKDPKGFWEFYRLRMRGLFTALPNRAHYALAELEKMGLIRAIITQNIDGLHQLAGSRNVIELHGNMRKCYCVNCLKTYDSDTVLDKIDKEGLPPKCECGGVIRPDVVLFGEPVYNISSALEIAREADLVLAIGSSLTVYPANMIPLTVKEMGGKLIILNAEETPLDNIADIVVRERVEEFLPCVVDYIKSQTLHRSS</sequence>
<keyword id="KW-0963">Cytoplasm</keyword>
<keyword id="KW-0479">Metal-binding</keyword>
<keyword id="KW-0520">NAD</keyword>
<keyword id="KW-1185">Reference proteome</keyword>
<keyword id="KW-0804">Transcription</keyword>
<keyword id="KW-0805">Transcription regulation</keyword>
<keyword id="KW-0808">Transferase</keyword>
<keyword id="KW-0862">Zinc</keyword>